<protein>
    <recommendedName>
        <fullName>Oxygen-dependent coproporphyrinogen-III oxidase, mitochondrial</fullName>
        <shortName>COX</shortName>
        <shortName>Coprogen oxidase</shortName>
        <shortName>Coproporphyrinogenase</shortName>
        <ecNumber evidence="4">1.3.3.3</ecNumber>
    </recommendedName>
</protein>
<reference evidence="7" key="1">
    <citation type="journal article" date="2004" name="Genome Res.">
        <title>The status, quality, and expansion of the NIH full-length cDNA project: the Mammalian Gene Collection (MGC).</title>
        <authorList>
            <consortium name="The MGC Project Team"/>
        </authorList>
    </citation>
    <scope>NUCLEOTIDE SEQUENCE [LARGE SCALE MRNA]</scope>
    <source>
        <tissue evidence="7">Prostate</tissue>
    </source>
</reference>
<reference evidence="5" key="2">
    <citation type="journal article" date="1978" name="Biochem. J.">
        <title>Evidence that the coproporphyrinogen oxidase activity of rat liver is situated in the intermembrane space of mitochondria.</title>
        <authorList>
            <person name="Elder G.H."/>
            <person name="Evans J.O."/>
        </authorList>
    </citation>
    <scope>FUNCTION</scope>
    <scope>CATALYTIC ACTIVITY</scope>
    <scope>PATHWAY</scope>
    <scope>SUBCELLULAR LOCATION</scope>
</reference>
<reference key="3">
    <citation type="journal article" date="2012" name="Nat. Commun.">
        <title>Quantitative maps of protein phosphorylation sites across 14 different rat organs and tissues.</title>
        <authorList>
            <person name="Lundby A."/>
            <person name="Secher A."/>
            <person name="Lage K."/>
            <person name="Nordsborg N.B."/>
            <person name="Dmytriyev A."/>
            <person name="Lundby C."/>
            <person name="Olsen J.V."/>
        </authorList>
    </citation>
    <scope>PHOSPHORYLATION [LARGE SCALE ANALYSIS] AT SER-101</scope>
    <scope>IDENTIFICATION BY MASS SPECTROMETRY [LARGE SCALE ANALYSIS]</scope>
</reference>
<keyword id="KW-0007">Acetylation</keyword>
<keyword id="KW-0350">Heme biosynthesis</keyword>
<keyword id="KW-0496">Mitochondrion</keyword>
<keyword id="KW-0560">Oxidoreductase</keyword>
<keyword id="KW-0597">Phosphoprotein</keyword>
<keyword id="KW-0627">Porphyrin biosynthesis</keyword>
<keyword id="KW-1185">Reference proteome</keyword>
<keyword id="KW-0809">Transit peptide</keyword>
<proteinExistence type="evidence at protein level"/>
<evidence type="ECO:0000250" key="1">
    <source>
        <dbReference type="UniProtKB" id="P36551"/>
    </source>
</evidence>
<evidence type="ECO:0000250" key="2">
    <source>
        <dbReference type="UniProtKB" id="P36552"/>
    </source>
</evidence>
<evidence type="ECO:0000256" key="3">
    <source>
        <dbReference type="SAM" id="MobiDB-lite"/>
    </source>
</evidence>
<evidence type="ECO:0000269" key="4">
    <source>
    </source>
</evidence>
<evidence type="ECO:0000305" key="5"/>
<evidence type="ECO:0000305" key="6">
    <source>
    </source>
</evidence>
<evidence type="ECO:0000312" key="7">
    <source>
        <dbReference type="EMBL" id="AAI07665.1"/>
    </source>
</evidence>
<evidence type="ECO:0007744" key="8">
    <source>
    </source>
</evidence>
<dbReference type="EC" id="1.3.3.3" evidence="4"/>
<dbReference type="EMBL" id="BC107664">
    <property type="protein sequence ID" value="AAI07665.1"/>
    <property type="molecule type" value="mRNA"/>
</dbReference>
<dbReference type="RefSeq" id="NP_001032172.1">
    <property type="nucleotide sequence ID" value="NM_001037095.1"/>
</dbReference>
<dbReference type="SMR" id="Q3B7D0"/>
<dbReference type="FunCoup" id="Q3B7D0">
    <property type="interactions" value="2183"/>
</dbReference>
<dbReference type="IntAct" id="Q3B7D0">
    <property type="interactions" value="2"/>
</dbReference>
<dbReference type="STRING" id="10116.ENSRNOP00000002257"/>
<dbReference type="iPTMnet" id="Q3B7D0"/>
<dbReference type="PhosphoSitePlus" id="Q3B7D0"/>
<dbReference type="SwissPalm" id="Q3B7D0"/>
<dbReference type="jPOST" id="Q3B7D0"/>
<dbReference type="PaxDb" id="10116-ENSRNOP00000002257"/>
<dbReference type="GeneID" id="304024"/>
<dbReference type="KEGG" id="rno:304024"/>
<dbReference type="UCSC" id="RGD:1311817">
    <property type="organism name" value="rat"/>
</dbReference>
<dbReference type="AGR" id="RGD:1311817"/>
<dbReference type="CTD" id="1371"/>
<dbReference type="RGD" id="1311817">
    <property type="gene designation" value="Cpox"/>
</dbReference>
<dbReference type="VEuPathDB" id="HostDB:ENSRNOG00000001654"/>
<dbReference type="eggNOG" id="KOG1518">
    <property type="taxonomic scope" value="Eukaryota"/>
</dbReference>
<dbReference type="HOGENOM" id="CLU_026169_1_1_1"/>
<dbReference type="InParanoid" id="Q3B7D0"/>
<dbReference type="OrthoDB" id="36065at9989"/>
<dbReference type="PhylomeDB" id="Q3B7D0"/>
<dbReference type="TreeFam" id="TF300703"/>
<dbReference type="Reactome" id="R-RNO-189451">
    <property type="pathway name" value="Heme biosynthesis"/>
</dbReference>
<dbReference type="UniPathway" id="UPA00251">
    <property type="reaction ID" value="UER00322"/>
</dbReference>
<dbReference type="PRO" id="PR:Q3B7D0"/>
<dbReference type="Proteomes" id="UP000002494">
    <property type="component" value="Chromosome 11"/>
</dbReference>
<dbReference type="Bgee" id="ENSRNOG00000001654">
    <property type="expression patterns" value="Expressed in stomach and 19 other cell types or tissues"/>
</dbReference>
<dbReference type="GO" id="GO:0005737">
    <property type="term" value="C:cytoplasm"/>
    <property type="evidence" value="ECO:0000318"/>
    <property type="project" value="GO_Central"/>
</dbReference>
<dbReference type="GO" id="GO:0005829">
    <property type="term" value="C:cytosol"/>
    <property type="evidence" value="ECO:0007669"/>
    <property type="project" value="Ensembl"/>
</dbReference>
<dbReference type="GO" id="GO:0016020">
    <property type="term" value="C:membrane"/>
    <property type="evidence" value="ECO:0000266"/>
    <property type="project" value="RGD"/>
</dbReference>
<dbReference type="GO" id="GO:0005743">
    <property type="term" value="C:mitochondrial inner membrane"/>
    <property type="evidence" value="ECO:0000314"/>
    <property type="project" value="RGD"/>
</dbReference>
<dbReference type="GO" id="GO:0005758">
    <property type="term" value="C:mitochondrial intermembrane space"/>
    <property type="evidence" value="ECO:0000266"/>
    <property type="project" value="RGD"/>
</dbReference>
<dbReference type="GO" id="GO:0005739">
    <property type="term" value="C:mitochondrion"/>
    <property type="evidence" value="ECO:0000266"/>
    <property type="project" value="RGD"/>
</dbReference>
<dbReference type="GO" id="GO:0004109">
    <property type="term" value="F:coproporphyrinogen oxidase activity"/>
    <property type="evidence" value="ECO:0000314"/>
    <property type="project" value="RGD"/>
</dbReference>
<dbReference type="GO" id="GO:0042802">
    <property type="term" value="F:identical protein binding"/>
    <property type="evidence" value="ECO:0000314"/>
    <property type="project" value="RGD"/>
</dbReference>
<dbReference type="GO" id="GO:0042803">
    <property type="term" value="F:protein homodimerization activity"/>
    <property type="evidence" value="ECO:0000250"/>
    <property type="project" value="UniProtKB"/>
</dbReference>
<dbReference type="GO" id="GO:0005212">
    <property type="term" value="F:structural constituent of eye lens"/>
    <property type="evidence" value="ECO:0000266"/>
    <property type="project" value="RGD"/>
</dbReference>
<dbReference type="GO" id="GO:0006784">
    <property type="term" value="P:heme A biosynthetic process"/>
    <property type="evidence" value="ECO:0000266"/>
    <property type="project" value="RGD"/>
</dbReference>
<dbReference type="GO" id="GO:0006785">
    <property type="term" value="P:heme B biosynthetic process"/>
    <property type="evidence" value="ECO:0000266"/>
    <property type="project" value="RGD"/>
</dbReference>
<dbReference type="GO" id="GO:0006783">
    <property type="term" value="P:heme biosynthetic process"/>
    <property type="evidence" value="ECO:0000314"/>
    <property type="project" value="RGD"/>
</dbReference>
<dbReference type="GO" id="GO:0048034">
    <property type="term" value="P:heme O biosynthetic process"/>
    <property type="evidence" value="ECO:0000266"/>
    <property type="project" value="RGD"/>
</dbReference>
<dbReference type="GO" id="GO:0006782">
    <property type="term" value="P:protoporphyrinogen IX biosynthetic process"/>
    <property type="evidence" value="ECO:0000314"/>
    <property type="project" value="RGD"/>
</dbReference>
<dbReference type="GO" id="GO:0046685">
    <property type="term" value="P:response to arsenic-containing substance"/>
    <property type="evidence" value="ECO:0000270"/>
    <property type="project" value="RGD"/>
</dbReference>
<dbReference type="GO" id="GO:0017085">
    <property type="term" value="P:response to insecticide"/>
    <property type="evidence" value="ECO:0000270"/>
    <property type="project" value="RGD"/>
</dbReference>
<dbReference type="GO" id="GO:0010039">
    <property type="term" value="P:response to iron ion"/>
    <property type="evidence" value="ECO:0000270"/>
    <property type="project" value="RGD"/>
</dbReference>
<dbReference type="GO" id="GO:0010288">
    <property type="term" value="P:response to lead ion"/>
    <property type="evidence" value="ECO:0000270"/>
    <property type="project" value="RGD"/>
</dbReference>
<dbReference type="GO" id="GO:0051597">
    <property type="term" value="P:response to methylmercury"/>
    <property type="evidence" value="ECO:0000270"/>
    <property type="project" value="RGD"/>
</dbReference>
<dbReference type="FunFam" id="3.40.1500.10:FF:000002">
    <property type="entry name" value="oxygen-dependent coproporphyrinogen-III oxidase, mitochondrial"/>
    <property type="match status" value="1"/>
</dbReference>
<dbReference type="Gene3D" id="3.40.1500.10">
    <property type="entry name" value="Coproporphyrinogen III oxidase, aerobic"/>
    <property type="match status" value="1"/>
</dbReference>
<dbReference type="InterPro" id="IPR001260">
    <property type="entry name" value="Coprogen_oxidase_aer"/>
</dbReference>
<dbReference type="InterPro" id="IPR036406">
    <property type="entry name" value="Coprogen_oxidase_aer_sf"/>
</dbReference>
<dbReference type="InterPro" id="IPR018375">
    <property type="entry name" value="Coprogen_oxidase_CS"/>
</dbReference>
<dbReference type="NCBIfam" id="NF003727">
    <property type="entry name" value="PRK05330.1"/>
    <property type="match status" value="1"/>
</dbReference>
<dbReference type="PANTHER" id="PTHR10755">
    <property type="entry name" value="COPROPORPHYRINOGEN III OXIDASE, MITOCHONDRIAL"/>
    <property type="match status" value="1"/>
</dbReference>
<dbReference type="PANTHER" id="PTHR10755:SF0">
    <property type="entry name" value="OXYGEN-DEPENDENT COPROPORPHYRINOGEN-III OXIDASE, MITOCHONDRIAL"/>
    <property type="match status" value="1"/>
</dbReference>
<dbReference type="Pfam" id="PF01218">
    <property type="entry name" value="Coprogen_oxidas"/>
    <property type="match status" value="1"/>
</dbReference>
<dbReference type="PRINTS" id="PR00073">
    <property type="entry name" value="COPRGNOXDASE"/>
</dbReference>
<dbReference type="SUPFAM" id="SSF102886">
    <property type="entry name" value="Coproporphyrinogen III oxidase"/>
    <property type="match status" value="1"/>
</dbReference>
<dbReference type="PROSITE" id="PS01021">
    <property type="entry name" value="COPROGEN_OXIDASE"/>
    <property type="match status" value="1"/>
</dbReference>
<feature type="transit peptide" description="Mitochondrion" evidence="2">
    <location>
        <begin position="1"/>
        <end position="98"/>
    </location>
</feature>
<feature type="chain" id="PRO_0000293624" description="Oxygen-dependent coproporphyrinogen-III oxidase, mitochondrial">
    <location>
        <begin position="99"/>
        <end position="443"/>
    </location>
</feature>
<feature type="region of interest" description="Disordered" evidence="3">
    <location>
        <begin position="90"/>
        <end position="111"/>
    </location>
</feature>
<feature type="region of interest" description="Important for dimerization" evidence="1">
    <location>
        <begin position="182"/>
        <end position="191"/>
    </location>
</feature>
<feature type="region of interest" description="Important for dimerization" evidence="1">
    <location>
        <begin position="381"/>
        <end position="417"/>
    </location>
</feature>
<feature type="active site" description="Proton donor" evidence="1">
    <location>
        <position position="247"/>
    </location>
</feature>
<feature type="binding site" evidence="1">
    <location>
        <position position="233"/>
    </location>
    <ligand>
        <name>coproporphyrinogen III</name>
        <dbReference type="ChEBI" id="CHEBI:57309"/>
    </ligand>
</feature>
<feature type="binding site" evidence="1">
    <location>
        <begin position="249"/>
        <end position="251"/>
    </location>
    <ligand>
        <name>coproporphyrinogen III</name>
        <dbReference type="ChEBI" id="CHEBI:57309"/>
    </ligand>
</feature>
<feature type="binding site" evidence="1">
    <location>
        <begin position="400"/>
        <end position="402"/>
    </location>
    <ligand>
        <name>coproporphyrinogen III</name>
        <dbReference type="ChEBI" id="CHEBI:57309"/>
    </ligand>
</feature>
<feature type="site" description="Important for dimerization" evidence="1">
    <location>
        <position position="316"/>
    </location>
</feature>
<feature type="modified residue" description="Phosphoserine" evidence="8">
    <location>
        <position position="101"/>
    </location>
</feature>
<feature type="modified residue" description="N6-acetyllysine; alternate" evidence="2">
    <location>
        <position position="393"/>
    </location>
</feature>
<feature type="modified residue" description="N6-succinyllysine; alternate" evidence="2">
    <location>
        <position position="393"/>
    </location>
</feature>
<sequence>MALRLGQLGSGPWWRAVRGDYAQLRAPSPRSASACVCRLPGTAGTQPRRGLGHGSSAGGGSRLGTGLAAALAGMAGLAAAVLGHVQRAEMVPKSSGARSPSPGRLEEDGDELARRCSTFMSSPVTELRELGRRPDDMKTKMELMIMETQAQVCRALAQVDGVADFSVDRWERKEGGGGITCVLQDGRVFEKAGVNISVVHGNLSEEAANQMRSRGKALKKKDGKLPFTAMGISSVIHPKNPYAPTMHFNYRYFEVEEADGKMHWWFGGGCDLTPTYLNREDAVHFHRTLKEACDQHGPDIYPKFKKWCDDYFFIAHRGERRGIGGIFFDDLDSPSKEEAFRFVKTCAEAVVPSYVPIVKKHCDDSYTPQDKLWQQLRRGRYVEFNLVYDRGTKFGLFTPGSRIESILMSLPLTARWEYMHSPPENSKEAEILEVLRHPKDWVH</sequence>
<comment type="function">
    <text evidence="4">Involved in the heme biosynthesis (PubMed:666752). Catalyzes the aerobic oxidative decarboxylation of propionate groups of rings A and B of coproporphyrinogen-III to yield the vinyl groups in protoporphyrinogen-IX (PubMed:666752).</text>
</comment>
<comment type="catalytic activity">
    <reaction evidence="4">
        <text>coproporphyrinogen III + O2 + 2 H(+) = protoporphyrinogen IX + 2 CO2 + 2 H2O</text>
        <dbReference type="Rhea" id="RHEA:18257"/>
        <dbReference type="ChEBI" id="CHEBI:15377"/>
        <dbReference type="ChEBI" id="CHEBI:15378"/>
        <dbReference type="ChEBI" id="CHEBI:15379"/>
        <dbReference type="ChEBI" id="CHEBI:16526"/>
        <dbReference type="ChEBI" id="CHEBI:57307"/>
        <dbReference type="ChEBI" id="CHEBI:57309"/>
        <dbReference type="EC" id="1.3.3.3"/>
    </reaction>
    <physiologicalReaction direction="left-to-right" evidence="6">
        <dbReference type="Rhea" id="RHEA:18258"/>
    </physiologicalReaction>
</comment>
<comment type="pathway">
    <text evidence="4">Porphyrin-containing compound metabolism; protoporphyrin-IX biosynthesis; protoporphyrinogen-IX from coproporphyrinogen-III (O2 route): step 1/1.</text>
</comment>
<comment type="subunit">
    <text evidence="1">Homodimer.</text>
</comment>
<comment type="subcellular location">
    <subcellularLocation>
        <location evidence="4">Mitochondrion intermembrane space</location>
    </subcellularLocation>
</comment>
<comment type="similarity">
    <text evidence="5">Belongs to the aerobic coproporphyrinogen-III oxidase family.</text>
</comment>
<accession>Q3B7D0</accession>
<organism>
    <name type="scientific">Rattus norvegicus</name>
    <name type="common">Rat</name>
    <dbReference type="NCBI Taxonomy" id="10116"/>
    <lineage>
        <taxon>Eukaryota</taxon>
        <taxon>Metazoa</taxon>
        <taxon>Chordata</taxon>
        <taxon>Craniata</taxon>
        <taxon>Vertebrata</taxon>
        <taxon>Euteleostomi</taxon>
        <taxon>Mammalia</taxon>
        <taxon>Eutheria</taxon>
        <taxon>Euarchontoglires</taxon>
        <taxon>Glires</taxon>
        <taxon>Rodentia</taxon>
        <taxon>Myomorpha</taxon>
        <taxon>Muroidea</taxon>
        <taxon>Muridae</taxon>
        <taxon>Murinae</taxon>
        <taxon>Rattus</taxon>
    </lineage>
</organism>
<gene>
    <name evidence="7" type="primary">Cpox</name>
    <name type="synonym">Cpo</name>
</gene>
<name>HEM6_RAT</name>